<feature type="chain" id="PRO_0000185200" description="Keratin-associated protein 13-1">
    <location>
        <begin position="1"/>
        <end position="172"/>
    </location>
</feature>
<feature type="repeat" description="1">
    <location>
        <begin position="46"/>
        <end position="55"/>
    </location>
</feature>
<feature type="repeat" description="2">
    <location>
        <begin position="56"/>
        <end position="65"/>
    </location>
</feature>
<feature type="repeat" description="3">
    <location>
        <begin position="66"/>
        <end position="75"/>
    </location>
</feature>
<feature type="repeat" description="4">
    <location>
        <begin position="76"/>
        <end position="85"/>
    </location>
</feature>
<feature type="repeat" description="5">
    <location>
        <begin position="92"/>
        <end position="101"/>
    </location>
</feature>
<feature type="region of interest" description="5 X 10 AA approximate repeats">
    <location>
        <begin position="46"/>
        <end position="101"/>
    </location>
</feature>
<proteinExistence type="evidence at protein level"/>
<name>KR131_HUMAN</name>
<accession>Q8IUC0</accession>
<accession>Q14D20</accession>
<accession>Q3LI79</accession>
<organism>
    <name type="scientific">Homo sapiens</name>
    <name type="common">Human</name>
    <dbReference type="NCBI Taxonomy" id="9606"/>
    <lineage>
        <taxon>Eukaryota</taxon>
        <taxon>Metazoa</taxon>
        <taxon>Chordata</taxon>
        <taxon>Craniata</taxon>
        <taxon>Vertebrata</taxon>
        <taxon>Euteleostomi</taxon>
        <taxon>Mammalia</taxon>
        <taxon>Eutheria</taxon>
        <taxon>Euarchontoglires</taxon>
        <taxon>Primates</taxon>
        <taxon>Haplorrhini</taxon>
        <taxon>Catarrhini</taxon>
        <taxon>Hominidae</taxon>
        <taxon>Homo</taxon>
    </lineage>
</organism>
<dbReference type="EMBL" id="AJ457066">
    <property type="protein sequence ID" value="CAD29722.1"/>
    <property type="molecule type" value="mRNA"/>
</dbReference>
<dbReference type="EMBL" id="AB096939">
    <property type="protein sequence ID" value="BAE46354.1"/>
    <property type="molecule type" value="mRNA"/>
</dbReference>
<dbReference type="EMBL" id="AP001708">
    <property type="status" value="NOT_ANNOTATED_CDS"/>
    <property type="molecule type" value="Genomic_DNA"/>
</dbReference>
<dbReference type="EMBL" id="BC113536">
    <property type="protein sequence ID" value="AAI13537.1"/>
    <property type="status" value="ALT_INIT"/>
    <property type="molecule type" value="mRNA"/>
</dbReference>
<dbReference type="EMBL" id="BC113538">
    <property type="protein sequence ID" value="AAI13539.1"/>
    <property type="status" value="ALT_INIT"/>
    <property type="molecule type" value="mRNA"/>
</dbReference>
<dbReference type="CCDS" id="CCDS13590.2"/>
<dbReference type="RefSeq" id="NP_853630.2">
    <property type="nucleotide sequence ID" value="NM_181599.3"/>
</dbReference>
<dbReference type="BioGRID" id="126601">
    <property type="interactions" value="43"/>
</dbReference>
<dbReference type="FunCoup" id="Q8IUC0">
    <property type="interactions" value="23"/>
</dbReference>
<dbReference type="IntAct" id="Q8IUC0">
    <property type="interactions" value="1"/>
</dbReference>
<dbReference type="MINT" id="Q8IUC0"/>
<dbReference type="STRING" id="9606.ENSP00000347635"/>
<dbReference type="iPTMnet" id="Q8IUC0"/>
<dbReference type="PhosphoSitePlus" id="Q8IUC0"/>
<dbReference type="BioMuta" id="KRTAP13-1"/>
<dbReference type="DMDM" id="33112378"/>
<dbReference type="MassIVE" id="Q8IUC0"/>
<dbReference type="PaxDb" id="9606-ENSP00000347635"/>
<dbReference type="PeptideAtlas" id="Q8IUC0"/>
<dbReference type="ProteomicsDB" id="70539"/>
<dbReference type="Antibodypedia" id="22470">
    <property type="antibodies" value="35 antibodies from 11 providers"/>
</dbReference>
<dbReference type="DNASU" id="140258"/>
<dbReference type="Ensembl" id="ENST00000355459.4">
    <property type="protein sequence ID" value="ENSP00000347635.2"/>
    <property type="gene ID" value="ENSG00000198390.5"/>
</dbReference>
<dbReference type="GeneID" id="140258"/>
<dbReference type="KEGG" id="hsa:140258"/>
<dbReference type="MANE-Select" id="ENST00000355459.4">
    <property type="protein sequence ID" value="ENSP00000347635.2"/>
    <property type="RefSeq nucleotide sequence ID" value="NM_181599.3"/>
    <property type="RefSeq protein sequence ID" value="NP_853630.2"/>
</dbReference>
<dbReference type="UCSC" id="uc002yoa.4">
    <property type="organism name" value="human"/>
</dbReference>
<dbReference type="AGR" id="HGNC:18924"/>
<dbReference type="CTD" id="140258"/>
<dbReference type="GeneCards" id="KRTAP13-1"/>
<dbReference type="HGNC" id="HGNC:18924">
    <property type="gene designation" value="KRTAP13-1"/>
</dbReference>
<dbReference type="HPA" id="ENSG00000198390">
    <property type="expression patterns" value="Tissue enriched (skin)"/>
</dbReference>
<dbReference type="MIM" id="608718">
    <property type="type" value="gene"/>
</dbReference>
<dbReference type="neXtProt" id="NX_Q8IUC0"/>
<dbReference type="OpenTargets" id="ENSG00000198390"/>
<dbReference type="PharmGKB" id="PA134987916"/>
<dbReference type="VEuPathDB" id="HostDB:ENSG00000198390"/>
<dbReference type="eggNOG" id="ENOG502STG2">
    <property type="taxonomic scope" value="Eukaryota"/>
</dbReference>
<dbReference type="GeneTree" id="ENSGT00940000162756"/>
<dbReference type="HOGENOM" id="CLU_111618_0_0_1"/>
<dbReference type="InParanoid" id="Q8IUC0"/>
<dbReference type="OMA" id="ACRSNFC"/>
<dbReference type="OrthoDB" id="9835168at2759"/>
<dbReference type="PAN-GO" id="Q8IUC0">
    <property type="GO annotations" value="0 GO annotations based on evolutionary models"/>
</dbReference>
<dbReference type="PhylomeDB" id="Q8IUC0"/>
<dbReference type="TreeFam" id="TF337331"/>
<dbReference type="PathwayCommons" id="Q8IUC0"/>
<dbReference type="Reactome" id="R-HSA-6805567">
    <property type="pathway name" value="Keratinization"/>
</dbReference>
<dbReference type="SignaLink" id="Q8IUC0"/>
<dbReference type="BioGRID-ORCS" id="140258">
    <property type="hits" value="12 hits in 1137 CRISPR screens"/>
</dbReference>
<dbReference type="GenomeRNAi" id="140258"/>
<dbReference type="Pharos" id="Q8IUC0">
    <property type="development level" value="Tdark"/>
</dbReference>
<dbReference type="PRO" id="PR:Q8IUC0"/>
<dbReference type="Proteomes" id="UP000005640">
    <property type="component" value="Chromosome 21"/>
</dbReference>
<dbReference type="RNAct" id="Q8IUC0">
    <property type="molecule type" value="protein"/>
</dbReference>
<dbReference type="Bgee" id="ENSG00000198390">
    <property type="expression patterns" value="Expressed in right lung and 15 other cell types or tissues"/>
</dbReference>
<dbReference type="GO" id="GO:0005829">
    <property type="term" value="C:cytosol"/>
    <property type="evidence" value="ECO:0000304"/>
    <property type="project" value="Reactome"/>
</dbReference>
<dbReference type="GO" id="GO:0045095">
    <property type="term" value="C:keratin filament"/>
    <property type="evidence" value="ECO:0007669"/>
    <property type="project" value="InterPro"/>
</dbReference>
<dbReference type="GO" id="GO:0005198">
    <property type="term" value="F:structural molecule activity"/>
    <property type="evidence" value="ECO:0007669"/>
    <property type="project" value="InterPro"/>
</dbReference>
<dbReference type="InterPro" id="IPR007659">
    <property type="entry name" value="Keratin_matx"/>
</dbReference>
<dbReference type="InterPro" id="IPR007951">
    <property type="entry name" value="KRTAP_PMG"/>
</dbReference>
<dbReference type="PANTHER" id="PTHR23260">
    <property type="entry name" value="KERATIN ASSOCIATED PROTEIN 3-3-RELATED"/>
    <property type="match status" value="1"/>
</dbReference>
<dbReference type="PANTHER" id="PTHR23260:SF7">
    <property type="entry name" value="KERATIN-ASSOCIATED PROTEIN 26-1"/>
    <property type="match status" value="1"/>
</dbReference>
<dbReference type="Pfam" id="PF05287">
    <property type="entry name" value="PMG"/>
    <property type="match status" value="1"/>
</dbReference>
<evidence type="ECO:0000269" key="1">
    <source>
    </source>
</evidence>
<evidence type="ECO:0000305" key="2"/>
<reference key="1">
    <citation type="journal article" date="2002" name="J. Biol. Chem.">
        <title>Characterization of a first domain of human high glycine-tyrosine and high sulfur keratin-associated protein (KAP) genes on chromosome 21q22.1.</title>
        <authorList>
            <person name="Rogers M.A."/>
            <person name="Langbein L."/>
            <person name="Winter H."/>
            <person name="Ehmann C."/>
            <person name="Praetzel S."/>
            <person name="Schweizer J."/>
        </authorList>
    </citation>
    <scope>NUCLEOTIDE SEQUENCE [MRNA]</scope>
    <scope>TISSUE SPECIFICITY</scope>
    <source>
        <tissue>Scalp</tissue>
    </source>
</reference>
<reference key="2">
    <citation type="submission" date="2002-11" db="EMBL/GenBank/DDBJ databases">
        <title>Identification of complete keratin-associated protein (KAP) gene cluster spanning 800 kb region on human chromosome 21q22.11.</title>
        <authorList>
            <person name="Obayashi I."/>
            <person name="Shibuya K."/>
            <person name="Minoshima S."/>
            <person name="Kudoh J."/>
            <person name="Shimizu N."/>
        </authorList>
    </citation>
    <scope>NUCLEOTIDE SEQUENCE [MRNA]</scope>
    <source>
        <tissue>Hair root</tissue>
    </source>
</reference>
<reference key="3">
    <citation type="journal article" date="2000" name="Nature">
        <title>The DNA sequence of human chromosome 21.</title>
        <authorList>
            <person name="Hattori M."/>
            <person name="Fujiyama A."/>
            <person name="Taylor T.D."/>
            <person name="Watanabe H."/>
            <person name="Yada T."/>
            <person name="Park H.-S."/>
            <person name="Toyoda A."/>
            <person name="Ishii K."/>
            <person name="Totoki Y."/>
            <person name="Choi D.-K."/>
            <person name="Groner Y."/>
            <person name="Soeda E."/>
            <person name="Ohki M."/>
            <person name="Takagi T."/>
            <person name="Sakaki Y."/>
            <person name="Taudien S."/>
            <person name="Blechschmidt K."/>
            <person name="Polley A."/>
            <person name="Menzel U."/>
            <person name="Delabar J."/>
            <person name="Kumpf K."/>
            <person name="Lehmann R."/>
            <person name="Patterson D."/>
            <person name="Reichwald K."/>
            <person name="Rump A."/>
            <person name="Schillhabel M."/>
            <person name="Schudy A."/>
            <person name="Zimmermann W."/>
            <person name="Rosenthal A."/>
            <person name="Kudoh J."/>
            <person name="Shibuya K."/>
            <person name="Kawasaki K."/>
            <person name="Asakawa S."/>
            <person name="Shintani A."/>
            <person name="Sasaki T."/>
            <person name="Nagamine K."/>
            <person name="Mitsuyama S."/>
            <person name="Antonarakis S.E."/>
            <person name="Minoshima S."/>
            <person name="Shimizu N."/>
            <person name="Nordsiek G."/>
            <person name="Hornischer K."/>
            <person name="Brandt P."/>
            <person name="Scharfe M."/>
            <person name="Schoen O."/>
            <person name="Desario A."/>
            <person name="Reichelt J."/>
            <person name="Kauer G."/>
            <person name="Bloecker H."/>
            <person name="Ramser J."/>
            <person name="Beck A."/>
            <person name="Klages S."/>
            <person name="Hennig S."/>
            <person name="Riesselmann L."/>
            <person name="Dagand E."/>
            <person name="Wehrmeyer S."/>
            <person name="Borzym K."/>
            <person name="Gardiner K."/>
            <person name="Nizetic D."/>
            <person name="Francis F."/>
            <person name="Lehrach H."/>
            <person name="Reinhardt R."/>
            <person name="Yaspo M.-L."/>
        </authorList>
    </citation>
    <scope>NUCLEOTIDE SEQUENCE [LARGE SCALE GENOMIC DNA]</scope>
</reference>
<reference key="4">
    <citation type="journal article" date="2004" name="Genome Res.">
        <title>The status, quality, and expansion of the NIH full-length cDNA project: the Mammalian Gene Collection (MGC).</title>
        <authorList>
            <consortium name="The MGC Project Team"/>
        </authorList>
    </citation>
    <scope>NUCLEOTIDE SEQUENCE [LARGE SCALE MRNA]</scope>
</reference>
<protein>
    <recommendedName>
        <fullName>Keratin-associated protein 13-1</fullName>
    </recommendedName>
    <alternativeName>
        <fullName>High sulfur keratin-associated protein 13.1</fullName>
    </alternativeName>
</protein>
<gene>
    <name type="primary">KRTAP13-1</name>
    <name type="synonym">KAP13.1</name>
    <name type="synonym">KRTAP13.1</name>
</gene>
<comment type="function">
    <text>In the hair cortex, hair keratin intermediate filaments are embedded in an interfilamentous matrix, consisting of hair keratin-associated proteins (KRTAP), which are essential for the formation of a rigid and resistant hair shaft through their extensive disulfide bond cross-linking with abundant cysteine residues of hair keratins. The matrix proteins include the high-sulfur and high-glycine-tyrosine keratins.</text>
</comment>
<comment type="subunit">
    <text>Interacts with hair keratins.</text>
</comment>
<comment type="tissue specificity">
    <text evidence="1">Weak expression seen in the late matrix and entire cortex area of the hair follicle.</text>
</comment>
<comment type="similarity">
    <text evidence="2">Belongs to the PMG family.</text>
</comment>
<comment type="caution">
    <text evidence="2">The sequence of 1-41 of PubMed:12359730 has not been submitted.</text>
</comment>
<comment type="sequence caution" evidence="2">
    <conflict type="erroneous initiation">
        <sequence resource="EMBL-CDS" id="AAI13537"/>
    </conflict>
</comment>
<comment type="sequence caution" evidence="2">
    <conflict type="erroneous initiation">
        <sequence resource="EMBL-CDS" id="AAI13539"/>
    </conflict>
</comment>
<sequence>MSYNCCSGNFSSRSCGGYLHYPASSCGFSYPSNQVYSTDLCSPSTCQLGSSLYRGCQQTCWEPTSCQTSYVESSPCQTSCYRPRTSLLCSPCQTTYSGSLGFGSSSCRSLGYGSRSCYSVGCGSSGFRSLGYGGCGFPSLGYGVGFCRPTYLASRSCQSSCYRPTCGSGFYY</sequence>
<keyword id="KW-0416">Keratin</keyword>
<keyword id="KW-1267">Proteomics identification</keyword>
<keyword id="KW-1185">Reference proteome</keyword>
<keyword id="KW-0677">Repeat</keyword>